<sequence length="265" mass="31823">MAKSRFEYVKQFERENFLLPDTYLIVRVDGKGFHKFSEEYEFSKPNDIRALKVMNNAAKNLMAQFPDIMMAYGDSDEYSFLLRRKCSLFERREMKLVSTFASFISVNYLYEWNLEFPEKQIRLERLPTFDARIVVYPTIKHIRDYFSWRQVDCHINNLYNTTFWTLVIKGGMTGREAENKLLGTVSSDKNEMLFKEFGINYNNESEIFKKGTILVREYDYTREGDDLSKRQQQRVEKQRKKASIEEYHLDIIGDTFWNERPWLLE</sequence>
<protein>
    <recommendedName>
        <fullName>tRNA(His) guanylyltransferase</fullName>
        <ecNumber evidence="2">2.7.7.79</ecNumber>
    </recommendedName>
    <alternativeName>
        <fullName>tRNA-histidine guanylyltransferase</fullName>
    </alternativeName>
</protein>
<evidence type="ECO:0000250" key="1"/>
<evidence type="ECO:0000250" key="2">
    <source>
        <dbReference type="UniProtKB" id="P53215"/>
    </source>
</evidence>
<evidence type="ECO:0000305" key="3"/>
<comment type="function">
    <text evidence="2">Adds a GMP to the 5'-end of tRNA(His) after transcription and RNase P cleavage.</text>
</comment>
<comment type="catalytic activity">
    <reaction evidence="2">
        <text>a 5'-end ribonucleotide-tRNA(His) + GTP + ATP + H2O = a 5'-end phospho-guanosine-ribonucleotide-tRNA(His) + AMP + 2 diphosphate + H(+)</text>
        <dbReference type="Rhea" id="RHEA:54564"/>
        <dbReference type="Rhea" id="RHEA-COMP:14193"/>
        <dbReference type="Rhea" id="RHEA-COMP:14917"/>
        <dbReference type="ChEBI" id="CHEBI:15377"/>
        <dbReference type="ChEBI" id="CHEBI:15378"/>
        <dbReference type="ChEBI" id="CHEBI:30616"/>
        <dbReference type="ChEBI" id="CHEBI:33019"/>
        <dbReference type="ChEBI" id="CHEBI:37565"/>
        <dbReference type="ChEBI" id="CHEBI:138282"/>
        <dbReference type="ChEBI" id="CHEBI:141847"/>
        <dbReference type="ChEBI" id="CHEBI:456215"/>
        <dbReference type="EC" id="2.7.7.79"/>
    </reaction>
</comment>
<comment type="cofactor">
    <cofactor evidence="1">
        <name>Mg(2+)</name>
        <dbReference type="ChEBI" id="CHEBI:18420"/>
    </cofactor>
    <text evidence="1">Binds 2 magnesium ions per subunit.</text>
</comment>
<comment type="similarity">
    <text evidence="3">Belongs to the tRNA(His) guanylyltransferase family.</text>
</comment>
<dbReference type="EC" id="2.7.7.79" evidence="2"/>
<dbReference type="EMBL" id="CR382138">
    <property type="protein sequence ID" value="CAG89743.2"/>
    <property type="molecule type" value="Genomic_DNA"/>
</dbReference>
<dbReference type="RefSeq" id="XP_461337.2">
    <property type="nucleotide sequence ID" value="XM_461337.1"/>
</dbReference>
<dbReference type="SMR" id="Q6BKD4"/>
<dbReference type="FunCoup" id="Q6BKD4">
    <property type="interactions" value="784"/>
</dbReference>
<dbReference type="STRING" id="284592.Q6BKD4"/>
<dbReference type="GeneID" id="2903455"/>
<dbReference type="KEGG" id="dha:DEHA2F22880g"/>
<dbReference type="VEuPathDB" id="FungiDB:DEHA2F22880g"/>
<dbReference type="eggNOG" id="KOG2721">
    <property type="taxonomic scope" value="Eukaryota"/>
</dbReference>
<dbReference type="HOGENOM" id="CLU_044271_1_0_1"/>
<dbReference type="InParanoid" id="Q6BKD4"/>
<dbReference type="OMA" id="WKQHTEI"/>
<dbReference type="OrthoDB" id="62560at2759"/>
<dbReference type="Proteomes" id="UP000000599">
    <property type="component" value="Chromosome F"/>
</dbReference>
<dbReference type="GO" id="GO:0005525">
    <property type="term" value="F:GTP binding"/>
    <property type="evidence" value="ECO:0007669"/>
    <property type="project" value="UniProtKB-KW"/>
</dbReference>
<dbReference type="GO" id="GO:0000287">
    <property type="term" value="F:magnesium ion binding"/>
    <property type="evidence" value="ECO:0007669"/>
    <property type="project" value="InterPro"/>
</dbReference>
<dbReference type="GO" id="GO:0008193">
    <property type="term" value="F:tRNA guanylyltransferase activity"/>
    <property type="evidence" value="ECO:0000250"/>
    <property type="project" value="UniProtKB"/>
</dbReference>
<dbReference type="GO" id="GO:0006400">
    <property type="term" value="P:tRNA modification"/>
    <property type="evidence" value="ECO:0000250"/>
    <property type="project" value="UniProtKB"/>
</dbReference>
<dbReference type="GO" id="GO:0008033">
    <property type="term" value="P:tRNA processing"/>
    <property type="evidence" value="ECO:0000250"/>
    <property type="project" value="UniProtKB"/>
</dbReference>
<dbReference type="FunFam" id="3.30.70.3000:FF:000001">
    <property type="entry name" value="tRNA(His) guanylyltransferase"/>
    <property type="match status" value="1"/>
</dbReference>
<dbReference type="Gene3D" id="3.30.70.3000">
    <property type="match status" value="1"/>
</dbReference>
<dbReference type="InterPro" id="IPR025845">
    <property type="entry name" value="Thg1_C_dom"/>
</dbReference>
<dbReference type="InterPro" id="IPR024956">
    <property type="entry name" value="tRNAHis_GuaTrfase_cat"/>
</dbReference>
<dbReference type="InterPro" id="IPR007537">
    <property type="entry name" value="tRNAHis_GuaTrfase_Thg1"/>
</dbReference>
<dbReference type="InterPro" id="IPR038469">
    <property type="entry name" value="tRNAHis_GuaTrfase_Thg1_sf"/>
</dbReference>
<dbReference type="PANTHER" id="PTHR12729">
    <property type="entry name" value="TRNA(HIS) GUANYLYLTRANSFERASE-RELATED"/>
    <property type="match status" value="1"/>
</dbReference>
<dbReference type="PANTHER" id="PTHR12729:SF6">
    <property type="entry name" value="TRNA(HIS) GUANYLYLTRANSFERASE-RELATED"/>
    <property type="match status" value="1"/>
</dbReference>
<dbReference type="Pfam" id="PF04446">
    <property type="entry name" value="Thg1"/>
    <property type="match status" value="1"/>
</dbReference>
<dbReference type="Pfam" id="PF14413">
    <property type="entry name" value="Thg1C"/>
    <property type="match status" value="1"/>
</dbReference>
<dbReference type="PIRSF" id="PIRSF028980">
    <property type="entry name" value="tRNAHis_guanylyltransferase"/>
    <property type="match status" value="1"/>
</dbReference>
<reference key="1">
    <citation type="journal article" date="2004" name="Nature">
        <title>Genome evolution in yeasts.</title>
        <authorList>
            <person name="Dujon B."/>
            <person name="Sherman D."/>
            <person name="Fischer G."/>
            <person name="Durrens P."/>
            <person name="Casaregola S."/>
            <person name="Lafontaine I."/>
            <person name="de Montigny J."/>
            <person name="Marck C."/>
            <person name="Neuveglise C."/>
            <person name="Talla E."/>
            <person name="Goffard N."/>
            <person name="Frangeul L."/>
            <person name="Aigle M."/>
            <person name="Anthouard V."/>
            <person name="Babour A."/>
            <person name="Barbe V."/>
            <person name="Barnay S."/>
            <person name="Blanchin S."/>
            <person name="Beckerich J.-M."/>
            <person name="Beyne E."/>
            <person name="Bleykasten C."/>
            <person name="Boisrame A."/>
            <person name="Boyer J."/>
            <person name="Cattolico L."/>
            <person name="Confanioleri F."/>
            <person name="de Daruvar A."/>
            <person name="Despons L."/>
            <person name="Fabre E."/>
            <person name="Fairhead C."/>
            <person name="Ferry-Dumazet H."/>
            <person name="Groppi A."/>
            <person name="Hantraye F."/>
            <person name="Hennequin C."/>
            <person name="Jauniaux N."/>
            <person name="Joyet P."/>
            <person name="Kachouri R."/>
            <person name="Kerrest A."/>
            <person name="Koszul R."/>
            <person name="Lemaire M."/>
            <person name="Lesur I."/>
            <person name="Ma L."/>
            <person name="Muller H."/>
            <person name="Nicaud J.-M."/>
            <person name="Nikolski M."/>
            <person name="Oztas S."/>
            <person name="Ozier-Kalogeropoulos O."/>
            <person name="Pellenz S."/>
            <person name="Potier S."/>
            <person name="Richard G.-F."/>
            <person name="Straub M.-L."/>
            <person name="Suleau A."/>
            <person name="Swennen D."/>
            <person name="Tekaia F."/>
            <person name="Wesolowski-Louvel M."/>
            <person name="Westhof E."/>
            <person name="Wirth B."/>
            <person name="Zeniou-Meyer M."/>
            <person name="Zivanovic Y."/>
            <person name="Bolotin-Fukuhara M."/>
            <person name="Thierry A."/>
            <person name="Bouchier C."/>
            <person name="Caudron B."/>
            <person name="Scarpelli C."/>
            <person name="Gaillardin C."/>
            <person name="Weissenbach J."/>
            <person name="Wincker P."/>
            <person name="Souciet J.-L."/>
        </authorList>
    </citation>
    <scope>NUCLEOTIDE SEQUENCE [LARGE SCALE GENOMIC DNA]</scope>
    <source>
        <strain>ATCC 36239 / CBS 767 / BCRC 21394 / JCM 1990 / NBRC 0083 / IGC 2968</strain>
    </source>
</reference>
<organism>
    <name type="scientific">Debaryomyces hansenii (strain ATCC 36239 / CBS 767 / BCRC 21394 / JCM 1990 / NBRC 0083 / IGC 2968)</name>
    <name type="common">Yeast</name>
    <name type="synonym">Torulaspora hansenii</name>
    <dbReference type="NCBI Taxonomy" id="284592"/>
    <lineage>
        <taxon>Eukaryota</taxon>
        <taxon>Fungi</taxon>
        <taxon>Dikarya</taxon>
        <taxon>Ascomycota</taxon>
        <taxon>Saccharomycotina</taxon>
        <taxon>Pichiomycetes</taxon>
        <taxon>Debaryomycetaceae</taxon>
        <taxon>Debaryomyces</taxon>
    </lineage>
</organism>
<accession>Q6BKD4</accession>
<feature type="chain" id="PRO_0000284989" description="tRNA(His) guanylyltransferase">
    <location>
        <begin position="1"/>
        <end position="265"/>
    </location>
</feature>
<feature type="binding site" evidence="1">
    <location>
        <begin position="29"/>
        <end position="34"/>
    </location>
    <ligand>
        <name>GTP</name>
        <dbReference type="ChEBI" id="CHEBI:37565"/>
    </ligand>
</feature>
<feature type="binding site" evidence="1">
    <location>
        <position position="29"/>
    </location>
    <ligand>
        <name>Mg(2+)</name>
        <dbReference type="ChEBI" id="CHEBI:18420"/>
        <label>1</label>
        <note>catalytic</note>
    </ligand>
</feature>
<feature type="binding site" evidence="1">
    <location>
        <position position="29"/>
    </location>
    <ligand>
        <name>Mg(2+)</name>
        <dbReference type="ChEBI" id="CHEBI:18420"/>
        <label>2</label>
        <note>catalytic</note>
    </ligand>
</feature>
<feature type="binding site" evidence="1">
    <location>
        <position position="30"/>
    </location>
    <ligand>
        <name>Mg(2+)</name>
        <dbReference type="ChEBI" id="CHEBI:18420"/>
        <label>1</label>
        <note>catalytic</note>
    </ligand>
</feature>
<feature type="binding site" evidence="1">
    <location>
        <begin position="75"/>
        <end position="76"/>
    </location>
    <ligand>
        <name>GTP</name>
        <dbReference type="ChEBI" id="CHEBI:37565"/>
    </ligand>
</feature>
<feature type="binding site" evidence="1">
    <location>
        <position position="76"/>
    </location>
    <ligand>
        <name>Mg(2+)</name>
        <dbReference type="ChEBI" id="CHEBI:18420"/>
        <label>1</label>
        <note>catalytic</note>
    </ligand>
</feature>
<feature type="binding site" evidence="1">
    <location>
        <position position="76"/>
    </location>
    <ligand>
        <name>Mg(2+)</name>
        <dbReference type="ChEBI" id="CHEBI:18420"/>
        <label>2</label>
        <note>catalytic</note>
    </ligand>
</feature>
<keyword id="KW-0342">GTP-binding</keyword>
<keyword id="KW-0460">Magnesium</keyword>
<keyword id="KW-0479">Metal-binding</keyword>
<keyword id="KW-0547">Nucleotide-binding</keyword>
<keyword id="KW-0548">Nucleotidyltransferase</keyword>
<keyword id="KW-1185">Reference proteome</keyword>
<keyword id="KW-0808">Transferase</keyword>
<keyword id="KW-0819">tRNA processing</keyword>
<proteinExistence type="inferred from homology"/>
<name>THG1_DEBHA</name>
<gene>
    <name type="primary">THG1</name>
    <name type="ordered locus">DEHA2F22880g</name>
</gene>